<name>RRF_ECO8A</name>
<sequence>MISDIRKDAEVRMDKCVEAFKTQISKIRTGRASPSLLDGIVVEYYGTPTPLRQLASVTVEDSRTLKINVFDRSMSPAVEKAIMASDLGLNPNSAGSDIRVPLPPLTEERRKDLTKIVRGEAEQARVAVRNVRRDANDKVKALLKDKEISEDDDRRSQDDVQKLTDAAIKKIEAALADKEAELMQF</sequence>
<proteinExistence type="inferred from homology"/>
<accession>B7M1X4</accession>
<keyword id="KW-0007">Acetylation</keyword>
<keyword id="KW-0963">Cytoplasm</keyword>
<keyword id="KW-0648">Protein biosynthesis</keyword>
<comment type="function">
    <text evidence="1">Responsible for the release of ribosomes from messenger RNA at the termination of protein biosynthesis. May increase the efficiency of translation by recycling ribosomes from one round of translation to another.</text>
</comment>
<comment type="subcellular location">
    <subcellularLocation>
        <location evidence="1">Cytoplasm</location>
    </subcellularLocation>
</comment>
<comment type="similarity">
    <text evidence="1">Belongs to the RRF family.</text>
</comment>
<protein>
    <recommendedName>
        <fullName evidence="1">Ribosome-recycling factor</fullName>
        <shortName evidence="1">RRF</shortName>
    </recommendedName>
    <alternativeName>
        <fullName evidence="1">Ribosome-releasing factor</fullName>
    </alternativeName>
</protein>
<dbReference type="EMBL" id="CU928160">
    <property type="protein sequence ID" value="CAQ97058.1"/>
    <property type="molecule type" value="Genomic_DNA"/>
</dbReference>
<dbReference type="RefSeq" id="WP_000622418.1">
    <property type="nucleotide sequence ID" value="NC_011741.1"/>
</dbReference>
<dbReference type="SMR" id="B7M1X4"/>
<dbReference type="GeneID" id="93777253"/>
<dbReference type="KEGG" id="ecr:ECIAI1_0170"/>
<dbReference type="HOGENOM" id="CLU_073981_2_1_6"/>
<dbReference type="GO" id="GO:0005829">
    <property type="term" value="C:cytosol"/>
    <property type="evidence" value="ECO:0007669"/>
    <property type="project" value="GOC"/>
</dbReference>
<dbReference type="GO" id="GO:0043023">
    <property type="term" value="F:ribosomal large subunit binding"/>
    <property type="evidence" value="ECO:0007669"/>
    <property type="project" value="TreeGrafter"/>
</dbReference>
<dbReference type="GO" id="GO:0002184">
    <property type="term" value="P:cytoplasmic translational termination"/>
    <property type="evidence" value="ECO:0007669"/>
    <property type="project" value="TreeGrafter"/>
</dbReference>
<dbReference type="CDD" id="cd00520">
    <property type="entry name" value="RRF"/>
    <property type="match status" value="1"/>
</dbReference>
<dbReference type="FunFam" id="1.10.132.20:FF:000001">
    <property type="entry name" value="Ribosome-recycling factor"/>
    <property type="match status" value="1"/>
</dbReference>
<dbReference type="FunFam" id="3.30.1360.40:FF:000001">
    <property type="entry name" value="Ribosome-recycling factor"/>
    <property type="match status" value="1"/>
</dbReference>
<dbReference type="Gene3D" id="3.30.1360.40">
    <property type="match status" value="1"/>
</dbReference>
<dbReference type="Gene3D" id="1.10.132.20">
    <property type="entry name" value="Ribosome-recycling factor"/>
    <property type="match status" value="1"/>
</dbReference>
<dbReference type="HAMAP" id="MF_00040">
    <property type="entry name" value="RRF"/>
    <property type="match status" value="1"/>
</dbReference>
<dbReference type="InterPro" id="IPR002661">
    <property type="entry name" value="Ribosome_recyc_fac"/>
</dbReference>
<dbReference type="InterPro" id="IPR023584">
    <property type="entry name" value="Ribosome_recyc_fac_dom"/>
</dbReference>
<dbReference type="InterPro" id="IPR036191">
    <property type="entry name" value="RRF_sf"/>
</dbReference>
<dbReference type="NCBIfam" id="TIGR00496">
    <property type="entry name" value="frr"/>
    <property type="match status" value="1"/>
</dbReference>
<dbReference type="PANTHER" id="PTHR20982:SF3">
    <property type="entry name" value="MITOCHONDRIAL RIBOSOME RECYCLING FACTOR PSEUDO 1"/>
    <property type="match status" value="1"/>
</dbReference>
<dbReference type="PANTHER" id="PTHR20982">
    <property type="entry name" value="RIBOSOME RECYCLING FACTOR"/>
    <property type="match status" value="1"/>
</dbReference>
<dbReference type="Pfam" id="PF01765">
    <property type="entry name" value="RRF"/>
    <property type="match status" value="1"/>
</dbReference>
<dbReference type="SUPFAM" id="SSF55194">
    <property type="entry name" value="Ribosome recycling factor, RRF"/>
    <property type="match status" value="1"/>
</dbReference>
<feature type="chain" id="PRO_1000194929" description="Ribosome-recycling factor">
    <location>
        <begin position="1"/>
        <end position="185"/>
    </location>
</feature>
<feature type="modified residue" description="N6-acetyllysine" evidence="1">
    <location>
        <position position="162"/>
    </location>
</feature>
<gene>
    <name evidence="1" type="primary">frr</name>
    <name type="ordered locus">ECIAI1_0170</name>
</gene>
<organism>
    <name type="scientific">Escherichia coli O8 (strain IAI1)</name>
    <dbReference type="NCBI Taxonomy" id="585034"/>
    <lineage>
        <taxon>Bacteria</taxon>
        <taxon>Pseudomonadati</taxon>
        <taxon>Pseudomonadota</taxon>
        <taxon>Gammaproteobacteria</taxon>
        <taxon>Enterobacterales</taxon>
        <taxon>Enterobacteriaceae</taxon>
        <taxon>Escherichia</taxon>
    </lineage>
</organism>
<reference key="1">
    <citation type="journal article" date="2009" name="PLoS Genet.">
        <title>Organised genome dynamics in the Escherichia coli species results in highly diverse adaptive paths.</title>
        <authorList>
            <person name="Touchon M."/>
            <person name="Hoede C."/>
            <person name="Tenaillon O."/>
            <person name="Barbe V."/>
            <person name="Baeriswyl S."/>
            <person name="Bidet P."/>
            <person name="Bingen E."/>
            <person name="Bonacorsi S."/>
            <person name="Bouchier C."/>
            <person name="Bouvet O."/>
            <person name="Calteau A."/>
            <person name="Chiapello H."/>
            <person name="Clermont O."/>
            <person name="Cruveiller S."/>
            <person name="Danchin A."/>
            <person name="Diard M."/>
            <person name="Dossat C."/>
            <person name="Karoui M.E."/>
            <person name="Frapy E."/>
            <person name="Garry L."/>
            <person name="Ghigo J.M."/>
            <person name="Gilles A.M."/>
            <person name="Johnson J."/>
            <person name="Le Bouguenec C."/>
            <person name="Lescat M."/>
            <person name="Mangenot S."/>
            <person name="Martinez-Jehanne V."/>
            <person name="Matic I."/>
            <person name="Nassif X."/>
            <person name="Oztas S."/>
            <person name="Petit M.A."/>
            <person name="Pichon C."/>
            <person name="Rouy Z."/>
            <person name="Ruf C.S."/>
            <person name="Schneider D."/>
            <person name="Tourret J."/>
            <person name="Vacherie B."/>
            <person name="Vallenet D."/>
            <person name="Medigue C."/>
            <person name="Rocha E.P.C."/>
            <person name="Denamur E."/>
        </authorList>
    </citation>
    <scope>NUCLEOTIDE SEQUENCE [LARGE SCALE GENOMIC DNA]</scope>
    <source>
        <strain>IAI1</strain>
    </source>
</reference>
<evidence type="ECO:0000255" key="1">
    <source>
        <dbReference type="HAMAP-Rule" id="MF_00040"/>
    </source>
</evidence>